<sequence length="69" mass="7398">MKLSAFTLAFALILMMAIMYNMAEAAALADADADAEAIAGLKDWWNKHKDKIVKVVKEMGKAGINAAGK</sequence>
<proteinExistence type="inferred from homology"/>
<keyword id="KW-0929">Antimicrobial</keyword>
<keyword id="KW-1185">Reference proteome</keyword>
<keyword id="KW-0964">Secreted</keyword>
<keyword id="KW-0732">Signal</keyword>
<evidence type="ECO:0000255" key="1"/>
<evidence type="ECO:0000269" key="2">
    <source>
    </source>
</evidence>
<evidence type="ECO:0000303" key="3">
    <source>
    </source>
</evidence>
<evidence type="ECO:0000303" key="4">
    <source>
    </source>
</evidence>
<evidence type="ECO:0000303" key="5">
    <source>
    </source>
</evidence>
<evidence type="ECO:0000305" key="6"/>
<evidence type="ECO:0000305" key="7">
    <source>
    </source>
</evidence>
<accession>P0DSK2</accession>
<comment type="function">
    <text evidence="2 6">May have antimicrobial properties, like most ant linear peptides (Probable). In addition, when tested in vitro on the parasite Trypanosoma cruzi (responsible of the Chagas disease), is able to moderately reduce the number of the three forms (epimastigote, trypomastigote and amastigote) by inducing cell death through necrosis (PubMed:28976889).</text>
</comment>
<comment type="subcellular location">
    <subcellularLocation>
        <location evidence="7">Secreted</location>
    </subcellularLocation>
</comment>
<comment type="tissue specificity">
    <text evidence="7">Expressed by the venom gland.</text>
</comment>
<comment type="online information" name="National Center for Biotechnology Information (NCBI)">
    <link uri="https://www.ncbi.nlm.nih.gov/nuccore/GANS01000002"/>
</comment>
<protein>
    <recommendedName>
        <fullName evidence="4">M-poneratoxin-Dq4e</fullName>
        <shortName evidence="4">M-PONTX-Dq4e</shortName>
    </recommendedName>
    <alternativeName>
        <fullName evidence="4">Peptide sDq-3348</fullName>
    </alternativeName>
    <alternativeName>
        <fullName evidence="6">U-poneritoxin(01)-Dq7a</fullName>
        <shortName evidence="5">PONTX(01)-Dq7 (contig 1)</shortName>
        <shortName evidence="6">U-PONTX(01)-Dq7a</shortName>
    </alternativeName>
    <alternativeName>
        <fullName evidence="3">contig 9</fullName>
    </alternativeName>
</protein>
<reference key="1">
    <citation type="journal article" date="2014" name="PLoS ONE">
        <title>Transcriptome analysis in venom gland of the predatory giant ant Dinoponera quadriceps: insights into the polypeptide toxin arsenal of hymenopterans.</title>
        <authorList>
            <person name="Torres A.F."/>
            <person name="Huang C."/>
            <person name="Chong C.M."/>
            <person name="Leung S.W."/>
            <person name="Prieto-da-Silva A.R."/>
            <person name="Havt A."/>
            <person name="Quinet Y.P."/>
            <person name="Martins A.M."/>
            <person name="Lee S.M."/>
            <person name="Radis-Baptista G."/>
        </authorList>
    </citation>
    <scope>NUCLEOTIDE SEQUENCE [MRNA]</scope>
    <source>
        <tissue>Venom gland</tissue>
    </source>
</reference>
<reference key="2">
    <citation type="journal article" date="2018" name="Biol. Chem.">
        <title>The dinoponeratoxin peptides from the giant ant Dinoponera quadriceps display in vitro antitrypanosomal activity.</title>
        <authorList>
            <person name="Lima D.B."/>
            <person name="Mello C.P."/>
            <person name="Bandeira I.C.J."/>
            <person name="Pessoa Bezerra de Menezes R.R.P."/>
            <person name="Sampaio T.L."/>
            <person name="Falcao C.B."/>
            <person name="Morlighem J.R.L."/>
            <person name="Radis-Baptista G."/>
            <person name="Martins A.M.C."/>
        </authorList>
    </citation>
    <scope>FUNCTION</scope>
    <scope>SYNTHESIS OF 40-69</scope>
</reference>
<reference key="3">
    <citation type="journal article" date="2018" name="Sci. Adv.">
        <title>A comprehensive portrait of the venom of the giant red bull ant, Myrmecia gulosa, reveals a hyperdiverse hymenopteran toxin gene family.</title>
        <authorList>
            <person name="Robinson S.D."/>
            <person name="Mueller A."/>
            <person name="Clayton D."/>
            <person name="Starobova H."/>
            <person name="Hamilton B.R."/>
            <person name="Payne R.J."/>
            <person name="Vetter I."/>
            <person name="King G.F."/>
            <person name="Undheim E.A.B."/>
        </authorList>
    </citation>
    <scope>NOMENCLATURE</scope>
</reference>
<name>TXM4E_DINQU</name>
<organism>
    <name type="scientific">Dinoponera quadriceps</name>
    <name type="common">South American ant</name>
    <dbReference type="NCBI Taxonomy" id="609295"/>
    <lineage>
        <taxon>Eukaryota</taxon>
        <taxon>Metazoa</taxon>
        <taxon>Ecdysozoa</taxon>
        <taxon>Arthropoda</taxon>
        <taxon>Hexapoda</taxon>
        <taxon>Insecta</taxon>
        <taxon>Pterygota</taxon>
        <taxon>Neoptera</taxon>
        <taxon>Endopterygota</taxon>
        <taxon>Hymenoptera</taxon>
        <taxon>Apocrita</taxon>
        <taxon>Aculeata</taxon>
        <taxon>Formicoidea</taxon>
        <taxon>Formicidae</taxon>
        <taxon>Ponerinae</taxon>
        <taxon>Ponerini</taxon>
        <taxon>Dinoponera</taxon>
    </lineage>
</organism>
<feature type="signal peptide" evidence="1">
    <location>
        <begin position="1"/>
        <end position="25"/>
    </location>
</feature>
<feature type="propeptide" id="PRO_0000447087" evidence="7">
    <location>
        <begin position="26"/>
        <end position="39"/>
    </location>
</feature>
<feature type="peptide" id="PRO_0000447088" description="M-poneratoxin-Dq4e" evidence="7">
    <location>
        <begin position="40"/>
        <end position="69"/>
    </location>
</feature>
<dbReference type="SMR" id="P0DSK2"/>
<dbReference type="Proteomes" id="UP000515204">
    <property type="component" value="Unplaced"/>
</dbReference>
<dbReference type="GO" id="GO:0005576">
    <property type="term" value="C:extracellular region"/>
    <property type="evidence" value="ECO:0007669"/>
    <property type="project" value="UniProtKB-SubCell"/>
</dbReference>